<proteinExistence type="evidence at protein level"/>
<accession>O94782</accession>
<accession>A0PJ95</accession>
<accession>D3DQ57</accession>
<accession>Q05BX7</accession>
<accession>Q59H66</accession>
<accession>Q9UFR0</accession>
<accession>Q9UNJ3</accession>
<reference key="1">
    <citation type="journal article" date="1998" name="Genomics">
        <title>Identification and chromosomal assignment of USP1, a novel gene encoding a human ubiquitin-specific protease.</title>
        <authorList>
            <person name="Fjiwara T."/>
            <person name="Saito A."/>
            <person name="Suzuki M."/>
            <person name="Shinomiya H."/>
            <person name="Suzuki T."/>
            <person name="Takahashi E."/>
            <person name="Tanigami A."/>
            <person name="Ichiyama A."/>
            <person name="Chung C.H."/>
            <person name="Nakamura Y."/>
            <person name="Tanaka K."/>
        </authorList>
    </citation>
    <scope>NUCLEOTIDE SEQUENCE [MRNA]</scope>
    <scope>CATALYTIC ACTIVITY</scope>
    <source>
        <tissue>Fetal brain</tissue>
    </source>
</reference>
<reference key="2">
    <citation type="submission" date="1999-01" db="EMBL/GenBank/DDBJ databases">
        <title>Molecular cloning of a novel human ubiquitin-specific protease.</title>
        <authorList>
            <person name="Seibold S."/>
            <person name="Marx M."/>
        </authorList>
    </citation>
    <scope>NUCLEOTIDE SEQUENCE [MRNA]</scope>
</reference>
<reference key="3">
    <citation type="journal article" date="2001" name="Genome Res.">
        <title>Towards a catalog of human genes and proteins: sequencing and analysis of 500 novel complete protein coding human cDNAs.</title>
        <authorList>
            <person name="Wiemann S."/>
            <person name="Weil B."/>
            <person name="Wellenreuther R."/>
            <person name="Gassenhuber J."/>
            <person name="Glassl S."/>
            <person name="Ansorge W."/>
            <person name="Boecher M."/>
            <person name="Bloecker H."/>
            <person name="Bauersachs S."/>
            <person name="Blum H."/>
            <person name="Lauber J."/>
            <person name="Duesterhoeft A."/>
            <person name="Beyer A."/>
            <person name="Koehrer K."/>
            <person name="Strack N."/>
            <person name="Mewes H.-W."/>
            <person name="Ottenwaelder B."/>
            <person name="Obermaier B."/>
            <person name="Tampe J."/>
            <person name="Heubner D."/>
            <person name="Wambutt R."/>
            <person name="Korn B."/>
            <person name="Klein M."/>
            <person name="Poustka A."/>
        </authorList>
    </citation>
    <scope>NUCLEOTIDE SEQUENCE [LARGE SCALE MRNA]</scope>
    <source>
        <tissue>Testis</tissue>
    </source>
</reference>
<reference key="4">
    <citation type="submission" date="2005-03" db="EMBL/GenBank/DDBJ databases">
        <authorList>
            <person name="Totoki Y."/>
            <person name="Toyoda A."/>
            <person name="Takeda T."/>
            <person name="Sakaki Y."/>
            <person name="Tanaka A."/>
            <person name="Yokoyama S."/>
            <person name="Ohara O."/>
            <person name="Nagase T."/>
            <person name="Kikuno R.F."/>
        </authorList>
    </citation>
    <scope>NUCLEOTIDE SEQUENCE [LARGE SCALE MRNA]</scope>
    <source>
        <tissue>Brain</tissue>
    </source>
</reference>
<reference key="5">
    <citation type="submission" date="2005-09" db="EMBL/GenBank/DDBJ databases">
        <authorList>
            <person name="Mural R.J."/>
            <person name="Istrail S."/>
            <person name="Sutton G.G."/>
            <person name="Florea L."/>
            <person name="Halpern A.L."/>
            <person name="Mobarry C.M."/>
            <person name="Lippert R."/>
            <person name="Walenz B."/>
            <person name="Shatkay H."/>
            <person name="Dew I."/>
            <person name="Miller J.R."/>
            <person name="Flanigan M.J."/>
            <person name="Edwards N.J."/>
            <person name="Bolanos R."/>
            <person name="Fasulo D."/>
            <person name="Halldorsson B.V."/>
            <person name="Hannenhalli S."/>
            <person name="Turner R."/>
            <person name="Yooseph S."/>
            <person name="Lu F."/>
            <person name="Nusskern D.R."/>
            <person name="Shue B.C."/>
            <person name="Zheng X.H."/>
            <person name="Zhong F."/>
            <person name="Delcher A.L."/>
            <person name="Huson D.H."/>
            <person name="Kravitz S.A."/>
            <person name="Mouchard L."/>
            <person name="Reinert K."/>
            <person name="Remington K.A."/>
            <person name="Clark A.G."/>
            <person name="Waterman M.S."/>
            <person name="Eichler E.E."/>
            <person name="Adams M.D."/>
            <person name="Hunkapiller M.W."/>
            <person name="Myers E.W."/>
            <person name="Venter J.C."/>
        </authorList>
    </citation>
    <scope>NUCLEOTIDE SEQUENCE [LARGE SCALE GENOMIC DNA]</scope>
</reference>
<reference key="6">
    <citation type="journal article" date="2004" name="Genome Res.">
        <title>The status, quality, and expansion of the NIH full-length cDNA project: the Mammalian Gene Collection (MGC).</title>
        <authorList>
            <consortium name="The MGC Project Team"/>
        </authorList>
    </citation>
    <scope>NUCLEOTIDE SEQUENCE [LARGE SCALE MRNA]</scope>
    <source>
        <tissue>Eye</tissue>
        <tissue>Testis</tissue>
        <tissue>Uterus</tissue>
    </source>
</reference>
<reference key="7">
    <citation type="journal article" date="2005" name="Mol. Cell">
        <title>The deubiquitinating enzyme USP1 regulates the Fanconi Anemia pathway.</title>
        <authorList>
            <person name="Nijman S.M.B."/>
            <person name="Huang T.T."/>
            <person name="Dirac A.M.G."/>
            <person name="Brummelkamp T.R."/>
            <person name="Kerkhoven R.M."/>
            <person name="D'Andrea A.D."/>
            <person name="Bernards R."/>
        </authorList>
    </citation>
    <scope>FUNCTION</scope>
    <scope>SUBCELLULAR LOCATION</scope>
    <scope>DEVELOPMENTAL STAGE</scope>
    <scope>UBIQUITINATION</scope>
    <scope>INTERACTION WITH FANCD2</scope>
    <scope>MUTAGENESIS OF CYS-90</scope>
    <scope>CATALYTIC ACTIVITY</scope>
    <scope>ACTIVE SITE</scope>
</reference>
<reference key="8">
    <citation type="journal article" date="2006" name="Nat. Cell Biol.">
        <title>Regulation of monoubiquitinated PCNA by DUB autocleavage.</title>
        <authorList>
            <person name="Huang T.T."/>
            <person name="Nijman S.M.B."/>
            <person name="Mirchandani K.D."/>
            <person name="Galardy P.J."/>
            <person name="Cohn M.A."/>
            <person name="Haas W."/>
            <person name="Gygi S.P."/>
            <person name="Ploegh H.L."/>
            <person name="Bernards R."/>
            <person name="D'Andrea A.D."/>
        </authorList>
    </citation>
    <scope>FUNCTION</scope>
    <scope>CLEAVAGE SITE</scope>
    <scope>MUTAGENESIS OF CYS-90 AND 670-GLY-GLY-671</scope>
    <scope>CATALYTIC ACTIVITY</scope>
    <scope>ACTIVE SITE</scope>
</reference>
<reference key="9">
    <citation type="journal article" date="2007" name="Mol. Cell">
        <title>A UAF1-containing multisubunit protein complex regulates the Fanconi anemia pathway.</title>
        <authorList>
            <person name="Cohn M.A."/>
            <person name="Kowal P."/>
            <person name="Yang K."/>
            <person name="Haas W."/>
            <person name="Huang T.T."/>
            <person name="Gygi S.P."/>
            <person name="D'Andrea A.D."/>
        </authorList>
    </citation>
    <scope>CATALYTIC ACTIVITY</scope>
    <scope>BIOPHYSICOCHEMICAL PROPERTIES</scope>
    <scope>FUNCTION</scope>
    <scope>INTERACTION WITH WDR48</scope>
    <scope>INDUCTION</scope>
</reference>
<reference key="10">
    <citation type="journal article" date="2007" name="Science">
        <title>ATM and ATR substrate analysis reveals extensive protein networks responsive to DNA damage.</title>
        <authorList>
            <person name="Matsuoka S."/>
            <person name="Ballif B.A."/>
            <person name="Smogorzewska A."/>
            <person name="McDonald E.R. III"/>
            <person name="Hurov K.E."/>
            <person name="Luo J."/>
            <person name="Bakalarski C.E."/>
            <person name="Zhao Z."/>
            <person name="Solimini N."/>
            <person name="Lerenthal Y."/>
            <person name="Shiloh Y."/>
            <person name="Gygi S.P."/>
            <person name="Elledge S.J."/>
        </authorList>
    </citation>
    <scope>PHOSPHORYLATION [LARGE SCALE ANALYSIS] AT SER-42</scope>
    <scope>IDENTIFICATION BY MASS SPECTROMETRY [LARGE SCALE ANALYSIS]</scope>
    <source>
        <tissue>Embryonic kidney</tissue>
    </source>
</reference>
<reference key="11">
    <citation type="journal article" date="2008" name="Proc. Natl. Acad. Sci. U.S.A.">
        <title>A quantitative atlas of mitotic phosphorylation.</title>
        <authorList>
            <person name="Dephoure N."/>
            <person name="Zhou C."/>
            <person name="Villen J."/>
            <person name="Beausoleil S.A."/>
            <person name="Bakalarski C.E."/>
            <person name="Elledge S.J."/>
            <person name="Gygi S.P."/>
        </authorList>
    </citation>
    <scope>PHOSPHORYLATION [LARGE SCALE ANALYSIS] AT SER-67</scope>
    <scope>IDENTIFICATION BY MASS SPECTROMETRY [LARGE SCALE ANALYSIS]</scope>
    <source>
        <tissue>Cervix carcinoma</tissue>
    </source>
</reference>
<reference key="12">
    <citation type="journal article" date="2009" name="Anal. Chem.">
        <title>Lys-N and trypsin cover complementary parts of the phosphoproteome in a refined SCX-based approach.</title>
        <authorList>
            <person name="Gauci S."/>
            <person name="Helbig A.O."/>
            <person name="Slijper M."/>
            <person name="Krijgsveld J."/>
            <person name="Heck A.J."/>
            <person name="Mohammed S."/>
        </authorList>
    </citation>
    <scope>IDENTIFICATION BY MASS SPECTROMETRY [LARGE SCALE ANALYSIS]</scope>
</reference>
<reference key="13">
    <citation type="journal article" date="2010" name="J. Biol. Chem.">
        <title>Human ELG1 regulates the level of ubiquitinated proliferating cell nuclear antigen (PCNA) through Its interactions with PCNA and USP1.</title>
        <authorList>
            <person name="Lee K.Y."/>
            <person name="Yang K."/>
            <person name="Cohn M.A."/>
            <person name="Sikdar N."/>
            <person name="D'Andrea A.D."/>
            <person name="Myung K."/>
        </authorList>
    </citation>
    <scope>FUNCTION</scope>
    <scope>INTERACTION WITH ATAD5</scope>
</reference>
<reference key="14">
    <citation type="journal article" date="2010" name="Sci. Signal.">
        <title>Quantitative phosphoproteomics reveals widespread full phosphorylation site occupancy during mitosis.</title>
        <authorList>
            <person name="Olsen J.V."/>
            <person name="Vermeulen M."/>
            <person name="Santamaria A."/>
            <person name="Kumar C."/>
            <person name="Miller M.L."/>
            <person name="Jensen L.J."/>
            <person name="Gnad F."/>
            <person name="Cox J."/>
            <person name="Jensen T.S."/>
            <person name="Nigg E.A."/>
            <person name="Brunak S."/>
            <person name="Mann M."/>
        </authorList>
    </citation>
    <scope>PHOSPHORYLATION [LARGE SCALE ANALYSIS] AT SER-42</scope>
    <scope>IDENTIFICATION BY MASS SPECTROMETRY [LARGE SCALE ANALYSIS]</scope>
    <source>
        <tissue>Cervix carcinoma</tissue>
    </source>
</reference>
<reference key="15">
    <citation type="journal article" date="2011" name="Sci. Signal.">
        <title>System-wide temporal characterization of the proteome and phosphoproteome of human embryonic stem cell differentiation.</title>
        <authorList>
            <person name="Rigbolt K.T."/>
            <person name="Prokhorova T.A."/>
            <person name="Akimov V."/>
            <person name="Henningsen J."/>
            <person name="Johansen P.T."/>
            <person name="Kratchmarova I."/>
            <person name="Kassem M."/>
            <person name="Mann M."/>
            <person name="Olsen J.V."/>
            <person name="Blagoev B."/>
        </authorList>
    </citation>
    <scope>PHOSPHORYLATION [LARGE SCALE ANALYSIS] AT SER-475</scope>
    <scope>IDENTIFICATION BY MASS SPECTROMETRY [LARGE SCALE ANALYSIS]</scope>
</reference>
<reference key="16">
    <citation type="journal article" date="2013" name="J. Proteome Res.">
        <title>Toward a comprehensive characterization of a human cancer cell phosphoproteome.</title>
        <authorList>
            <person name="Zhou H."/>
            <person name="Di Palma S."/>
            <person name="Preisinger C."/>
            <person name="Peng M."/>
            <person name="Polat A.N."/>
            <person name="Heck A.J."/>
            <person name="Mohammed S."/>
        </authorList>
    </citation>
    <scope>PHOSPHORYLATION [LARGE SCALE ANALYSIS] AT SER-16; SER-42; SER-67; SER-313 AND SER-475</scope>
    <scope>IDENTIFICATION BY MASS SPECTROMETRY [LARGE SCALE ANALYSIS]</scope>
    <source>
        <tissue>Cervix carcinoma</tissue>
        <tissue>Erythroleukemia</tissue>
    </source>
</reference>
<reference key="17">
    <citation type="journal article" date="2015" name="Structure">
        <title>Structural insights into WD-repeat 48 activation of ubiquitin-specific protease 46.</title>
        <authorList>
            <person name="Yin J."/>
            <person name="Schoeffler A.J."/>
            <person name="Wickliffe K."/>
            <person name="Newton K."/>
            <person name="Starovasnik M.A."/>
            <person name="Dueber E.C."/>
            <person name="Harris S.F."/>
        </authorList>
    </citation>
    <scope>FUNCTION</scope>
    <scope>CATALYTIC ACTIVITY</scope>
    <scope>INTERACTION WITH WDR48</scope>
    <scope>MUTAGENESIS OF CYS-90 AND GLU-444</scope>
    <scope>ACTIVE SITE</scope>
</reference>
<reference key="18">
    <citation type="journal article" date="2018" name="Mol. Cell">
        <title>C-terminal end-directed protein elimination by CRL2 ubiquitin ligases.</title>
        <authorList>
            <person name="Lin H.C."/>
            <person name="Yeh C.W."/>
            <person name="Chen Y.F."/>
            <person name="Lee T.T."/>
            <person name="Hsieh P.Y."/>
            <person name="Rusnac D.V."/>
            <person name="Lin S.Y."/>
            <person name="Elledge S.J."/>
            <person name="Zheng N."/>
            <person name="Yen H.S."/>
        </authorList>
    </citation>
    <scope>UBIQUITINATION</scope>
</reference>
<reference evidence="15" key="19">
    <citation type="journal article" date="2018" name="Mol. Cell">
        <title>Recognition of the diglycine C-end degron by CRL2(KLHDC2) ubiquitin ligase.</title>
        <authorList>
            <person name="Rusnac D.V."/>
            <person name="Lin H.C."/>
            <person name="Canzani D."/>
            <person name="Tien K.X."/>
            <person name="Hinds T.R."/>
            <person name="Tsue A.F."/>
            <person name="Bush M.F."/>
            <person name="Yen H.S."/>
            <person name="Zheng N."/>
        </authorList>
    </citation>
    <scope>X-RAY CRYSTALLOGRAPHY (2.50 ANGSTROMS) OF 666-671 IN COMPLEX WITH KLHDC2</scope>
    <scope>UBIQUITINATION</scope>
</reference>
<dbReference type="EC" id="3.4.19.12" evidence="5 6 7 9 12"/>
<dbReference type="EMBL" id="AB014458">
    <property type="protein sequence ID" value="BAA34703.1"/>
    <property type="molecule type" value="mRNA"/>
</dbReference>
<dbReference type="EMBL" id="AF117386">
    <property type="protein sequence ID" value="AAD11441.1"/>
    <property type="molecule type" value="mRNA"/>
</dbReference>
<dbReference type="EMBL" id="AL117575">
    <property type="protein sequence ID" value="CAB55999.1"/>
    <property type="molecule type" value="mRNA"/>
</dbReference>
<dbReference type="EMBL" id="AL117503">
    <property type="protein sequence ID" value="CAB55967.1"/>
    <property type="molecule type" value="mRNA"/>
</dbReference>
<dbReference type="EMBL" id="AB208893">
    <property type="protein sequence ID" value="BAD92130.1"/>
    <property type="status" value="ALT_FRAME"/>
    <property type="molecule type" value="mRNA"/>
</dbReference>
<dbReference type="EMBL" id="CH471059">
    <property type="protein sequence ID" value="EAX06585.1"/>
    <property type="molecule type" value="Genomic_DNA"/>
</dbReference>
<dbReference type="EMBL" id="CH471059">
    <property type="protein sequence ID" value="EAX06586.1"/>
    <property type="molecule type" value="Genomic_DNA"/>
</dbReference>
<dbReference type="EMBL" id="BC050525">
    <property type="protein sequence ID" value="AAH50525.1"/>
    <property type="molecule type" value="mRNA"/>
</dbReference>
<dbReference type="EMBL" id="BC018745">
    <property type="protein sequence ID" value="AAH18745.1"/>
    <property type="status" value="ALT_SEQ"/>
    <property type="molecule type" value="mRNA"/>
</dbReference>
<dbReference type="EMBL" id="BC032364">
    <property type="protein sequence ID" value="AAH32364.1"/>
    <property type="status" value="ALT_SEQ"/>
    <property type="molecule type" value="mRNA"/>
</dbReference>
<dbReference type="CCDS" id="CCDS621.1"/>
<dbReference type="PIR" id="T17309">
    <property type="entry name" value="T17309"/>
</dbReference>
<dbReference type="RefSeq" id="NP_001017415.1">
    <property type="nucleotide sequence ID" value="NM_001017415.2"/>
</dbReference>
<dbReference type="RefSeq" id="NP_001017416.1">
    <property type="nucleotide sequence ID" value="NM_001017416.2"/>
</dbReference>
<dbReference type="RefSeq" id="NP_003359.3">
    <property type="nucleotide sequence ID" value="NM_003368.4"/>
</dbReference>
<dbReference type="PDB" id="6DO5">
    <property type="method" value="X-ray"/>
    <property type="resolution" value="2.50 A"/>
    <property type="chains" value="C/D=666-671"/>
</dbReference>
<dbReference type="PDB" id="7AY0">
    <property type="method" value="X-ray"/>
    <property type="resolution" value="3.60 A"/>
    <property type="chains" value="B/D=67-785"/>
</dbReference>
<dbReference type="PDB" id="7AY1">
    <property type="method" value="EM"/>
    <property type="resolution" value="3.70 A"/>
    <property type="chains" value="D=1-785"/>
</dbReference>
<dbReference type="PDB" id="7AY2">
    <property type="method" value="X-ray"/>
    <property type="resolution" value="3.20 A"/>
    <property type="chains" value="B/E=67-785"/>
</dbReference>
<dbReference type="PDB" id="7ZH3">
    <property type="method" value="EM"/>
    <property type="resolution" value="2.50 A"/>
    <property type="chains" value="D=1-785"/>
</dbReference>
<dbReference type="PDB" id="7ZH4">
    <property type="method" value="EM"/>
    <property type="resolution" value="2.49 A"/>
    <property type="chains" value="D=1-785"/>
</dbReference>
<dbReference type="PDB" id="8A9J">
    <property type="method" value="EM"/>
    <property type="resolution" value="2.80 A"/>
    <property type="chains" value="D=1-785"/>
</dbReference>
<dbReference type="PDB" id="8A9K">
    <property type="method" value="EM"/>
    <property type="resolution" value="2.85 A"/>
    <property type="chains" value="D=1-785"/>
</dbReference>
<dbReference type="PDB" id="9EBS">
    <property type="method" value="EM"/>
    <property type="resolution" value="3.30 A"/>
    <property type="chains" value="E=1-785"/>
</dbReference>
<dbReference type="PDB" id="9FCI">
    <property type="method" value="EM"/>
    <property type="resolution" value="3.20 A"/>
    <property type="chains" value="D=1-785"/>
</dbReference>
<dbReference type="PDB" id="9FCJ">
    <property type="method" value="EM"/>
    <property type="resolution" value="2.70 A"/>
    <property type="chains" value="D=1-785"/>
</dbReference>
<dbReference type="PDB" id="9HNW">
    <property type="method" value="EM"/>
    <property type="resolution" value="3.04 A"/>
    <property type="chains" value="A=21-785"/>
</dbReference>
<dbReference type="PDBsum" id="6DO5"/>
<dbReference type="PDBsum" id="7AY0"/>
<dbReference type="PDBsum" id="7AY1"/>
<dbReference type="PDBsum" id="7AY2"/>
<dbReference type="PDBsum" id="7ZH3"/>
<dbReference type="PDBsum" id="7ZH4"/>
<dbReference type="PDBsum" id="8A9J"/>
<dbReference type="PDBsum" id="8A9K"/>
<dbReference type="PDBsum" id="9EBS"/>
<dbReference type="PDBsum" id="9FCI"/>
<dbReference type="PDBsum" id="9FCJ"/>
<dbReference type="PDBsum" id="9HNW"/>
<dbReference type="EMDB" id="EMD-11934"/>
<dbReference type="EMDB" id="EMD-14720"/>
<dbReference type="EMDB" id="EMD-14721"/>
<dbReference type="EMDB" id="EMD-14722"/>
<dbReference type="EMDB" id="EMD-15284"/>
<dbReference type="EMDB" id="EMD-47889"/>
<dbReference type="EMDB" id="EMD-50316"/>
<dbReference type="EMDB" id="EMD-50317"/>
<dbReference type="EMDB" id="EMD-52316"/>
<dbReference type="SMR" id="O94782"/>
<dbReference type="BioGRID" id="113241">
    <property type="interactions" value="136"/>
</dbReference>
<dbReference type="ComplexPortal" id="CPX-9442">
    <property type="entry name" value="USP1-UAF1 deubiquitinase complex"/>
</dbReference>
<dbReference type="CORUM" id="O94782"/>
<dbReference type="DIP" id="DIP-53609N"/>
<dbReference type="FunCoup" id="O94782">
    <property type="interactions" value="4773"/>
</dbReference>
<dbReference type="IntAct" id="O94782">
    <property type="interactions" value="52"/>
</dbReference>
<dbReference type="MINT" id="O94782"/>
<dbReference type="STRING" id="9606.ENSP00000343526"/>
<dbReference type="BindingDB" id="O94782"/>
<dbReference type="ChEMBL" id="CHEMBL1795087"/>
<dbReference type="DrugCentral" id="O94782"/>
<dbReference type="GuidetoPHARMACOLOGY" id="2428"/>
<dbReference type="MEROPS" id="C19.019"/>
<dbReference type="GlyGen" id="O94782">
    <property type="glycosylation" value="1 site, 1 O-linked glycan (1 site)"/>
</dbReference>
<dbReference type="iPTMnet" id="O94782"/>
<dbReference type="PhosphoSitePlus" id="O94782"/>
<dbReference type="BioMuta" id="USP1"/>
<dbReference type="OGP" id="O94782"/>
<dbReference type="CPTAC" id="CPTAC-952"/>
<dbReference type="jPOST" id="O94782"/>
<dbReference type="MassIVE" id="O94782"/>
<dbReference type="PaxDb" id="9606-ENSP00000343526"/>
<dbReference type="PeptideAtlas" id="O94782"/>
<dbReference type="ProteomicsDB" id="50441"/>
<dbReference type="Pumba" id="O94782"/>
<dbReference type="Antibodypedia" id="33332">
    <property type="antibodies" value="338 antibodies from 35 providers"/>
</dbReference>
<dbReference type="DNASU" id="7398"/>
<dbReference type="Ensembl" id="ENST00000339950.5">
    <property type="protein sequence ID" value="ENSP00000343526.4"/>
    <property type="gene ID" value="ENSG00000162607.13"/>
</dbReference>
<dbReference type="Ensembl" id="ENST00000371146.5">
    <property type="protein sequence ID" value="ENSP00000360188.1"/>
    <property type="gene ID" value="ENSG00000162607.13"/>
</dbReference>
<dbReference type="GeneID" id="7398"/>
<dbReference type="KEGG" id="hsa:7398"/>
<dbReference type="MANE-Select" id="ENST00000339950.5">
    <property type="protein sequence ID" value="ENSP00000343526.4"/>
    <property type="RefSeq nucleotide sequence ID" value="NM_003368.5"/>
    <property type="RefSeq protein sequence ID" value="NP_003359.3"/>
</dbReference>
<dbReference type="UCSC" id="uc001daj.3">
    <property type="organism name" value="human"/>
</dbReference>
<dbReference type="AGR" id="HGNC:12607"/>
<dbReference type="CTD" id="7398"/>
<dbReference type="DisGeNET" id="7398"/>
<dbReference type="GeneCards" id="USP1"/>
<dbReference type="HGNC" id="HGNC:12607">
    <property type="gene designation" value="USP1"/>
</dbReference>
<dbReference type="HPA" id="ENSG00000162607">
    <property type="expression patterns" value="Low tissue specificity"/>
</dbReference>
<dbReference type="MIM" id="603478">
    <property type="type" value="gene"/>
</dbReference>
<dbReference type="neXtProt" id="NX_O94782"/>
<dbReference type="OpenTargets" id="ENSG00000162607"/>
<dbReference type="PharmGKB" id="PA37233"/>
<dbReference type="VEuPathDB" id="HostDB:ENSG00000162607"/>
<dbReference type="eggNOG" id="KOG1864">
    <property type="taxonomic scope" value="Eukaryota"/>
</dbReference>
<dbReference type="GeneTree" id="ENSGT00910000144243"/>
<dbReference type="HOGENOM" id="CLU_019874_0_0_1"/>
<dbReference type="InParanoid" id="O94782"/>
<dbReference type="OMA" id="MNTTCHG"/>
<dbReference type="OrthoDB" id="10062454at2759"/>
<dbReference type="PAN-GO" id="O94782">
    <property type="GO annotations" value="5 GO annotations based on evolutionary models"/>
</dbReference>
<dbReference type="PhylomeDB" id="O94782"/>
<dbReference type="TreeFam" id="TF331057"/>
<dbReference type="PathwayCommons" id="O94782"/>
<dbReference type="Reactome" id="R-HSA-110314">
    <property type="pathway name" value="Recognition of DNA damage by PCNA-containing replication complex"/>
</dbReference>
<dbReference type="Reactome" id="R-HSA-6783310">
    <property type="pathway name" value="Fanconi Anemia Pathway"/>
</dbReference>
<dbReference type="SignaLink" id="O94782"/>
<dbReference type="SIGNOR" id="O94782"/>
<dbReference type="BioGRID-ORCS" id="7398">
    <property type="hits" value="148 hits in 1202 CRISPR screens"/>
</dbReference>
<dbReference type="ChiTaRS" id="USP1">
    <property type="organism name" value="human"/>
</dbReference>
<dbReference type="GeneWiki" id="USP1"/>
<dbReference type="GenomeRNAi" id="7398"/>
<dbReference type="Pharos" id="O94782">
    <property type="development level" value="Tchem"/>
</dbReference>
<dbReference type="PRO" id="PR:O94782"/>
<dbReference type="Proteomes" id="UP000005640">
    <property type="component" value="Chromosome 1"/>
</dbReference>
<dbReference type="RNAct" id="O94782">
    <property type="molecule type" value="protein"/>
</dbReference>
<dbReference type="Bgee" id="ENSG00000162607">
    <property type="expression patterns" value="Expressed in secondary oocyte and 212 other cell types or tissues"/>
</dbReference>
<dbReference type="ExpressionAtlas" id="O94782">
    <property type="expression patterns" value="baseline and differential"/>
</dbReference>
<dbReference type="GO" id="GO:0005829">
    <property type="term" value="C:cytosol"/>
    <property type="evidence" value="ECO:0000318"/>
    <property type="project" value="GO_Central"/>
</dbReference>
<dbReference type="GO" id="GO:0005654">
    <property type="term" value="C:nucleoplasm"/>
    <property type="evidence" value="ECO:0000314"/>
    <property type="project" value="HPA"/>
</dbReference>
<dbReference type="GO" id="GO:0005634">
    <property type="term" value="C:nucleus"/>
    <property type="evidence" value="ECO:0000314"/>
    <property type="project" value="UniProtKB"/>
</dbReference>
<dbReference type="GO" id="GO:0004843">
    <property type="term" value="F:cysteine-type deubiquitinase activity"/>
    <property type="evidence" value="ECO:0000314"/>
    <property type="project" value="UniProtKB"/>
</dbReference>
<dbReference type="GO" id="GO:0004197">
    <property type="term" value="F:cysteine-type endopeptidase activity"/>
    <property type="evidence" value="ECO:0000304"/>
    <property type="project" value="ProtInc"/>
</dbReference>
<dbReference type="GO" id="GO:0008233">
    <property type="term" value="F:peptidase activity"/>
    <property type="evidence" value="ECO:0000269"/>
    <property type="project" value="Reactome"/>
</dbReference>
<dbReference type="GO" id="GO:0006281">
    <property type="term" value="P:DNA repair"/>
    <property type="evidence" value="ECO:0007669"/>
    <property type="project" value="UniProtKB-KW"/>
</dbReference>
<dbReference type="GO" id="GO:0035520">
    <property type="term" value="P:monoubiquitinated protein deubiquitination"/>
    <property type="evidence" value="ECO:0000315"/>
    <property type="project" value="UniProtKB"/>
</dbReference>
<dbReference type="GO" id="GO:1904333">
    <property type="term" value="P:positive regulation of error-prone translesion synthesis"/>
    <property type="evidence" value="ECO:0000304"/>
    <property type="project" value="Reactome"/>
</dbReference>
<dbReference type="GO" id="GO:0046427">
    <property type="term" value="P:positive regulation of receptor signaling pathway via JAK-STAT"/>
    <property type="evidence" value="ECO:0000314"/>
    <property type="project" value="UniProt"/>
</dbReference>
<dbReference type="GO" id="GO:0016579">
    <property type="term" value="P:protein deubiquitination"/>
    <property type="evidence" value="ECO:0000314"/>
    <property type="project" value="UniProtKB"/>
</dbReference>
<dbReference type="GO" id="GO:0006508">
    <property type="term" value="P:proteolysis"/>
    <property type="evidence" value="ECO:0007669"/>
    <property type="project" value="UniProtKB-KW"/>
</dbReference>
<dbReference type="GO" id="GO:0006282">
    <property type="term" value="P:regulation of DNA repair"/>
    <property type="evidence" value="ECO:0000314"/>
    <property type="project" value="UniProtKB"/>
</dbReference>
<dbReference type="GO" id="GO:0031647">
    <property type="term" value="P:regulation of protein stability"/>
    <property type="evidence" value="ECO:0000318"/>
    <property type="project" value="GO_Central"/>
</dbReference>
<dbReference type="GO" id="GO:0009411">
    <property type="term" value="P:response to UV"/>
    <property type="evidence" value="ECO:0000314"/>
    <property type="project" value="UniProtKB"/>
</dbReference>
<dbReference type="GO" id="GO:0001501">
    <property type="term" value="P:skeletal system development"/>
    <property type="evidence" value="ECO:0007669"/>
    <property type="project" value="Ensembl"/>
</dbReference>
<dbReference type="CDD" id="cd02671">
    <property type="entry name" value="Peptidase_C19O"/>
    <property type="match status" value="1"/>
</dbReference>
<dbReference type="FunFam" id="3.90.70.10:FF:000053">
    <property type="entry name" value="Ubiquitin carboxyl-terminal hydrolase 1"/>
    <property type="match status" value="1"/>
</dbReference>
<dbReference type="FunFam" id="3.90.70.10:FF:000077">
    <property type="entry name" value="Ubiquitin carboxyl-terminal hydrolase 1"/>
    <property type="match status" value="1"/>
</dbReference>
<dbReference type="Gene3D" id="3.90.70.10">
    <property type="entry name" value="Cysteine proteinases"/>
    <property type="match status" value="2"/>
</dbReference>
<dbReference type="InterPro" id="IPR038765">
    <property type="entry name" value="Papain-like_cys_pep_sf"/>
</dbReference>
<dbReference type="InterPro" id="IPR050164">
    <property type="entry name" value="Peptidase_C19"/>
</dbReference>
<dbReference type="InterPro" id="IPR001394">
    <property type="entry name" value="Peptidase_C19_UCH"/>
</dbReference>
<dbReference type="InterPro" id="IPR033815">
    <property type="entry name" value="USP1"/>
</dbReference>
<dbReference type="InterPro" id="IPR018200">
    <property type="entry name" value="USP_CS"/>
</dbReference>
<dbReference type="InterPro" id="IPR028889">
    <property type="entry name" value="USP_dom"/>
</dbReference>
<dbReference type="PANTHER" id="PTHR24006">
    <property type="entry name" value="UBIQUITIN CARBOXYL-TERMINAL HYDROLASE"/>
    <property type="match status" value="1"/>
</dbReference>
<dbReference type="PANTHER" id="PTHR24006:SF905">
    <property type="entry name" value="UBIQUITIN CARBOXYL-TERMINAL HYDROLASE 1"/>
    <property type="match status" value="1"/>
</dbReference>
<dbReference type="Pfam" id="PF00443">
    <property type="entry name" value="UCH"/>
    <property type="match status" value="1"/>
</dbReference>
<dbReference type="SUPFAM" id="SSF54001">
    <property type="entry name" value="Cysteine proteinases"/>
    <property type="match status" value="1"/>
</dbReference>
<dbReference type="PROSITE" id="PS00972">
    <property type="entry name" value="USP_1"/>
    <property type="match status" value="1"/>
</dbReference>
<dbReference type="PROSITE" id="PS00973">
    <property type="entry name" value="USP_2"/>
    <property type="match status" value="1"/>
</dbReference>
<dbReference type="PROSITE" id="PS50235">
    <property type="entry name" value="USP_3"/>
    <property type="match status" value="1"/>
</dbReference>
<name>UBP1_HUMAN</name>
<sequence length="785" mass="88207">MPGVIPSESNGLSRGSPSKKNRLSLKFFQKKETKRALDFTDSQENEEKASEYRASEIDQVVPAAQSSPINCEKRENLLPFVGLNNLGNTCYLNSILQVLYFCPGFKSGVKHLFNIISRKKEALKDEANQKDKGNCKEDSLASYELICSLQSLIISVEQLQASFLLNPEKYTDELATQPRRLLNTLRELNPMYEGYLQHDAQEVLQCILGNIQETCQLLKKEEVKNVAELPTKVEEIPHPKEEMNGINSIEMDSMRHSEDFKEKLPKGNGKRKSDTEFGNMKKKVKLSKEHQSLEENQRQTRSKRKATSDTLESPPKIIPKYISENESPRPSQKKSRVKINWLKSATKQPSILSKFCSLGKITTNQGVKGQSKENECDPEEDLGKCESDNTTNGCGLESPGNTVTPVNVNEVKPINKGEEQIGFELVEKLFQGQLVLRTRCLECESLTERREDFQDISVPVQEDELSKVEESSEISPEPKTEMKTLRWAISQFASVERIVGEDKYFCENCHHYTEAERSLLFDKMPEVITIHLKCFAASGLEFDCYGGGLSKINTPLLTPLKLSLEEWSTKPTNDSYGLFAVVMHSGITISSGHYTASVKVTDLNSLELDKGNFVVDQMCEIGKPEPLNEEEARGVVENYNDEEVSIRVGGNTQPSKVLNKKNVEAIGLLGGQKSKADYELYNKASNPDKVASTAFAENRNSETSDTTGTHESDRNKESSDQTGINISGFENKISYVVQSLKEYEGKWLLFDDSEVKVTEEKDFLNSLSPSTSPTSTPYLLFYKKL</sequence>
<evidence type="ECO:0000250" key="1">
    <source>
        <dbReference type="UniProtKB" id="Q8BJQ2"/>
    </source>
</evidence>
<evidence type="ECO:0000255" key="2">
    <source>
        <dbReference type="PROSITE-ProRule" id="PRU10092"/>
    </source>
</evidence>
<evidence type="ECO:0000255" key="3">
    <source>
        <dbReference type="PROSITE-ProRule" id="PRU10093"/>
    </source>
</evidence>
<evidence type="ECO:0000256" key="4">
    <source>
        <dbReference type="SAM" id="MobiDB-lite"/>
    </source>
</evidence>
<evidence type="ECO:0000269" key="5">
    <source>
    </source>
</evidence>
<evidence type="ECO:0000269" key="6">
    <source>
    </source>
</evidence>
<evidence type="ECO:0000269" key="7">
    <source>
    </source>
</evidence>
<evidence type="ECO:0000269" key="8">
    <source>
    </source>
</evidence>
<evidence type="ECO:0000269" key="9">
    <source>
    </source>
</evidence>
<evidence type="ECO:0000269" key="10">
    <source>
    </source>
</evidence>
<evidence type="ECO:0000269" key="11">
    <source>
    </source>
</evidence>
<evidence type="ECO:0000269" key="12">
    <source>
    </source>
</evidence>
<evidence type="ECO:0000303" key="13">
    <source>
    </source>
</evidence>
<evidence type="ECO:0000305" key="14"/>
<evidence type="ECO:0007744" key="15">
    <source>
        <dbReference type="PDB" id="6DO5"/>
    </source>
</evidence>
<evidence type="ECO:0007744" key="16">
    <source>
    </source>
</evidence>
<evidence type="ECO:0007744" key="17">
    <source>
    </source>
</evidence>
<evidence type="ECO:0007744" key="18">
    <source>
    </source>
</evidence>
<evidence type="ECO:0007744" key="19">
    <source>
    </source>
</evidence>
<evidence type="ECO:0007744" key="20">
    <source>
    </source>
</evidence>
<evidence type="ECO:0007829" key="21">
    <source>
        <dbReference type="PDB" id="6DO5"/>
    </source>
</evidence>
<evidence type="ECO:0007829" key="22">
    <source>
        <dbReference type="PDB" id="7ZH3"/>
    </source>
</evidence>
<evidence type="ECO:0007829" key="23">
    <source>
        <dbReference type="PDB" id="7ZH4"/>
    </source>
</evidence>
<evidence type="ECO:0007829" key="24">
    <source>
        <dbReference type="PDB" id="9FCJ"/>
    </source>
</evidence>
<organism>
    <name type="scientific">Homo sapiens</name>
    <name type="common">Human</name>
    <dbReference type="NCBI Taxonomy" id="9606"/>
    <lineage>
        <taxon>Eukaryota</taxon>
        <taxon>Metazoa</taxon>
        <taxon>Chordata</taxon>
        <taxon>Craniata</taxon>
        <taxon>Vertebrata</taxon>
        <taxon>Euteleostomi</taxon>
        <taxon>Mammalia</taxon>
        <taxon>Eutheria</taxon>
        <taxon>Euarchontoglires</taxon>
        <taxon>Primates</taxon>
        <taxon>Haplorrhini</taxon>
        <taxon>Catarrhini</taxon>
        <taxon>Hominidae</taxon>
        <taxon>Homo</taxon>
    </lineage>
</organism>
<comment type="function">
    <text evidence="5 6 7 8 9">Negative regulator of DNA damage repair which specifically deubiquitinates monoubiquitinated FANCD2 (PubMed:15694335). Also involved in PCNA-mediated translesion synthesis (TLS) by deubiquitinating monoubiquitinated PCNA (PubMed:16531995, PubMed:20147293). Has almost no deubiquitinating activity by itself and requires the interaction with WDR48 to have a high activity (PubMed:18082604, PubMed:26388029).</text>
</comment>
<comment type="catalytic activity">
    <reaction evidence="5 6 7 9 12">
        <text>Thiol-dependent hydrolysis of ester, thioester, amide, peptide and isopeptide bonds formed by the C-terminal Gly of ubiquitin (a 76-residue protein attached to proteins as an intracellular targeting signal).</text>
        <dbReference type="EC" id="3.4.19.12"/>
    </reaction>
</comment>
<comment type="biophysicochemical properties">
    <kinetics>
        <KM evidence="7">0.7 uM for ubiquitin vinyl sulfone (in presence of WDR48)</KM>
        <KM evidence="7">1.4 uM for ubiquitin vinyl sulfone (in absence of WDR48)</KM>
    </kinetics>
</comment>
<comment type="subunit">
    <text evidence="5 6 7 8 9">Interacts with FANCD2 and PCNA (PubMed:15694335, PubMed:16531995). Interacts with WDR48 (PubMed:18082604, PubMed:26388029). Interacts with ATAD5; the interaction regulates USP1-mediated PCNA deubiquitination (PubMed:20147293).</text>
</comment>
<comment type="interaction">
    <interactant intactId="EBI-2513396">
        <id>O94782</id>
    </interactant>
    <interactant intactId="EBI-1045469">
        <id>Q8TAF3</id>
        <label>WDR48</label>
    </interactant>
    <organismsDiffer>false</organismsDiffer>
    <experiments>8</experiments>
</comment>
<comment type="interaction">
    <interactant intactId="EBI-2513396">
        <id>O94782</id>
    </interactant>
    <interactant intactId="EBI-16178048">
        <id>Q8TAF3-1</id>
        <label>WDR48</label>
    </interactant>
    <organismsDiffer>false</organismsDiffer>
    <experiments>2</experiments>
</comment>
<comment type="subcellular location">
    <subcellularLocation>
        <location evidence="5">Nucleus</location>
    </subcellularLocation>
</comment>
<comment type="developmental stage">
    <text evidence="5">Cell cycle-regulated. Highest level during S phase.</text>
</comment>
<comment type="induction">
    <text evidence="7">Down-regulated following DNA damage.</text>
</comment>
<comment type="PTM">
    <text evidence="5 6">Autocatalytic cleavage of USP1 following UV irradiation inactivates it, leading to an increase in ubiquitinated PCNA, recruitment of POLH and translesion synthesis.</text>
</comment>
<comment type="PTM">
    <molecule>Ubiquitin carboxyl-terminal hydrolase 1, N-terminal fragment</molecule>
    <text evidence="10 11">Ubiquitinated by the CRL2(KLHDC2) complex following autocatalytic cleavage, leading to its degradation: the CRL2(KLHDC2) complex recognizes the diglycine (Gly-Gly) at the C-terminus.</text>
</comment>
<comment type="miscellaneous">
    <text>HEK293T cells expressing reduced levels of USP1 show a higher level of ubiquitinated PCNA and an increase in point mutations upon UV irradiation.</text>
</comment>
<comment type="similarity">
    <text evidence="14">Belongs to the peptidase C19 family.</text>
</comment>
<comment type="sequence caution" evidence="14">
    <conflict type="miscellaneous discrepancy">
        <sequence resource="EMBL-CDS" id="AAH18745"/>
    </conflict>
    <text>Contaminating sequence. Potential poly-A sequence.</text>
</comment>
<comment type="sequence caution" evidence="14">
    <conflict type="miscellaneous discrepancy">
        <sequence resource="EMBL-CDS" id="AAH32364"/>
    </conflict>
    <text>Contaminating sequence. Potential poly-A sequence.</text>
</comment>
<comment type="sequence caution" evidence="14">
    <conflict type="frameshift">
        <sequence resource="EMBL-CDS" id="BAD92130"/>
    </conflict>
</comment>
<keyword id="KW-0002">3D-structure</keyword>
<keyword id="KW-0068">Autocatalytic cleavage</keyword>
<keyword id="KW-0227">DNA damage</keyword>
<keyword id="KW-0234">DNA repair</keyword>
<keyword id="KW-0378">Hydrolase</keyword>
<keyword id="KW-0539">Nucleus</keyword>
<keyword id="KW-0597">Phosphoprotein</keyword>
<keyword id="KW-0645">Protease</keyword>
<keyword id="KW-1267">Proteomics identification</keyword>
<keyword id="KW-1185">Reference proteome</keyword>
<keyword id="KW-0788">Thiol protease</keyword>
<keyword id="KW-0832">Ubl conjugation</keyword>
<keyword id="KW-0833">Ubl conjugation pathway</keyword>
<gene>
    <name type="primary">USP1</name>
</gene>
<feature type="chain" id="PRO_0000080615" description="Ubiquitin carboxyl-terminal hydrolase 1">
    <location>
        <begin position="1"/>
        <end position="785"/>
    </location>
</feature>
<feature type="chain" id="PRO_0000453162" description="Ubiquitin carboxyl-terminal hydrolase 1, N-terminal fragment">
    <location>
        <begin position="1"/>
        <end position="671"/>
    </location>
</feature>
<feature type="domain" description="USP">
    <location>
        <begin position="81"/>
        <end position="785"/>
    </location>
</feature>
<feature type="region of interest" description="Disordered" evidence="4">
    <location>
        <begin position="1"/>
        <end position="21"/>
    </location>
</feature>
<feature type="region of interest" description="Disordered" evidence="4">
    <location>
        <begin position="33"/>
        <end position="52"/>
    </location>
</feature>
<feature type="region of interest" description="Disordered" evidence="4">
    <location>
        <begin position="258"/>
        <end position="336"/>
    </location>
</feature>
<feature type="region of interest" description="Disordered" evidence="4">
    <location>
        <begin position="693"/>
        <end position="723"/>
    </location>
</feature>
<feature type="compositionally biased region" description="Polar residues" evidence="4">
    <location>
        <begin position="7"/>
        <end position="16"/>
    </location>
</feature>
<feature type="compositionally biased region" description="Basic and acidic residues" evidence="4">
    <location>
        <begin position="258"/>
        <end position="275"/>
    </location>
</feature>
<feature type="compositionally biased region" description="Basic and acidic residues" evidence="4">
    <location>
        <begin position="286"/>
        <end position="298"/>
    </location>
</feature>
<feature type="compositionally biased region" description="Basic and acidic residues" evidence="4">
    <location>
        <begin position="708"/>
        <end position="719"/>
    </location>
</feature>
<feature type="active site" description="Nucleophile" evidence="5 6 9">
    <location>
        <position position="90"/>
    </location>
</feature>
<feature type="active site" description="Proton acceptor" evidence="2 3">
    <location>
        <position position="593"/>
    </location>
</feature>
<feature type="site" description="Cleavage; by autolysis" evidence="6">
    <location>
        <begin position="671"/>
        <end position="672"/>
    </location>
</feature>
<feature type="modified residue" description="Phosphoserine" evidence="20">
    <location>
        <position position="16"/>
    </location>
</feature>
<feature type="modified residue" description="Phosphoserine" evidence="16 18 20">
    <location>
        <position position="42"/>
    </location>
</feature>
<feature type="modified residue" description="Phosphoserine" evidence="17 20">
    <location>
        <position position="67"/>
    </location>
</feature>
<feature type="modified residue" description="Phosphoserine" evidence="20">
    <location>
        <position position="313"/>
    </location>
</feature>
<feature type="modified residue" description="Phosphoserine" evidence="19 20">
    <location>
        <position position="475"/>
    </location>
</feature>
<feature type="modified residue" description="Phosphoserine" evidence="1">
    <location>
        <position position="768"/>
    </location>
</feature>
<feature type="mutagenesis site" description="Loss of catalytic activity including autolysis." evidence="5 6 9">
    <original>C</original>
    <variation>S</variation>
    <location>
        <position position="90"/>
    </location>
</feature>
<feature type="mutagenesis site" description="Strongly reduces interaction with WDR48 and activation by WDR48." evidence="9">
    <original>E</original>
    <variation>K</variation>
    <location>
        <position position="444"/>
    </location>
</feature>
<feature type="mutagenesis site" description="Loss of autolysis-mediated degradation upon UV irradiation. No effect on catalytic activity." evidence="6">
    <original>GG</original>
    <variation>AA</variation>
    <location>
        <begin position="670"/>
        <end position="671"/>
    </location>
</feature>
<feature type="sequence conflict" description="In Ref. 2; AAD11441." evidence="14" ref="2">
    <original>I</original>
    <variation>M</variation>
    <location>
        <position position="621"/>
    </location>
</feature>
<feature type="helix" evidence="23">
    <location>
        <begin position="86"/>
        <end position="89"/>
    </location>
</feature>
<feature type="helix" evidence="23">
    <location>
        <begin position="90"/>
        <end position="100"/>
    </location>
</feature>
<feature type="helix" evidence="23">
    <location>
        <begin position="105"/>
        <end position="119"/>
    </location>
</feature>
<feature type="helix" evidence="23">
    <location>
        <begin position="144"/>
        <end position="165"/>
    </location>
</feature>
<feature type="helix" evidence="24">
    <location>
        <begin position="167"/>
        <end position="176"/>
    </location>
</feature>
<feature type="helix" evidence="22">
    <location>
        <begin position="179"/>
        <end position="188"/>
    </location>
</feature>
<feature type="helix" evidence="22">
    <location>
        <begin position="190"/>
        <end position="192"/>
    </location>
</feature>
<feature type="strand" evidence="22">
    <location>
        <begin position="193"/>
        <end position="195"/>
    </location>
</feature>
<feature type="helix" evidence="23">
    <location>
        <begin position="200"/>
        <end position="219"/>
    </location>
</feature>
<feature type="helix" evidence="23">
    <location>
        <begin position="425"/>
        <end position="430"/>
    </location>
</feature>
<feature type="strand" evidence="23">
    <location>
        <begin position="432"/>
        <end position="440"/>
    </location>
</feature>
<feature type="turn" evidence="23">
    <location>
        <begin position="441"/>
        <end position="443"/>
    </location>
</feature>
<feature type="strand" evidence="23">
    <location>
        <begin position="446"/>
        <end position="461"/>
    </location>
</feature>
<feature type="helix" evidence="23">
    <location>
        <begin position="485"/>
        <end position="493"/>
    </location>
</feature>
<feature type="strand" evidence="23">
    <location>
        <begin position="496"/>
        <end position="498"/>
    </location>
</feature>
<feature type="helix" evidence="23">
    <location>
        <begin position="500"/>
        <end position="502"/>
    </location>
</feature>
<feature type="strand" evidence="23">
    <location>
        <begin position="504"/>
        <end position="506"/>
    </location>
</feature>
<feature type="turn" evidence="23">
    <location>
        <begin position="507"/>
        <end position="510"/>
    </location>
</feature>
<feature type="strand" evidence="23">
    <location>
        <begin position="511"/>
        <end position="513"/>
    </location>
</feature>
<feature type="strand" evidence="23">
    <location>
        <begin position="515"/>
        <end position="521"/>
    </location>
</feature>
<feature type="strand" evidence="23">
    <location>
        <begin position="526"/>
        <end position="533"/>
    </location>
</feature>
<feature type="strand" evidence="23">
    <location>
        <begin position="535"/>
        <end position="537"/>
    </location>
</feature>
<feature type="strand" evidence="23">
    <location>
        <begin position="549"/>
        <end position="551"/>
    </location>
</feature>
<feature type="strand" evidence="23">
    <location>
        <begin position="560"/>
        <end position="562"/>
    </location>
</feature>
<feature type="helix" evidence="23">
    <location>
        <begin position="565"/>
        <end position="567"/>
    </location>
</feature>
<feature type="strand" evidence="23">
    <location>
        <begin position="568"/>
        <end position="570"/>
    </location>
</feature>
<feature type="strand" evidence="23">
    <location>
        <begin position="576"/>
        <end position="591"/>
    </location>
</feature>
<feature type="strand" evidence="23">
    <location>
        <begin position="593"/>
        <end position="599"/>
    </location>
</feature>
<feature type="turn" evidence="21">
    <location>
        <begin position="667"/>
        <end position="670"/>
    </location>
</feature>
<feature type="helix" evidence="22">
    <location>
        <begin position="738"/>
        <end position="741"/>
    </location>
</feature>
<feature type="turn" evidence="22">
    <location>
        <begin position="742"/>
        <end position="745"/>
    </location>
</feature>
<feature type="strand" evidence="23">
    <location>
        <begin position="747"/>
        <end position="751"/>
    </location>
</feature>
<feature type="strand" evidence="23">
    <location>
        <begin position="754"/>
        <end position="758"/>
    </location>
</feature>
<feature type="helix" evidence="23">
    <location>
        <begin position="760"/>
        <end position="766"/>
    </location>
</feature>
<feature type="helix" evidence="23">
    <location>
        <begin position="769"/>
        <end position="771"/>
    </location>
</feature>
<feature type="strand" evidence="23">
    <location>
        <begin position="774"/>
        <end position="784"/>
    </location>
</feature>
<protein>
    <recommendedName>
        <fullName>Ubiquitin carboxyl-terminal hydrolase 1</fullName>
        <ecNumber evidence="5 6 7 9 12">3.4.19.12</ecNumber>
    </recommendedName>
    <alternativeName>
        <fullName>Deubiquitinating enzyme 1</fullName>
        <shortName>hUBP</shortName>
    </alternativeName>
    <alternativeName>
        <fullName>Ubiquitin thioesterase 1</fullName>
    </alternativeName>
    <alternativeName>
        <fullName>Ubiquitin-specific-processing protease 1</fullName>
    </alternativeName>
    <component>
        <recommendedName>
            <fullName evidence="13">Ubiquitin carboxyl-terminal hydrolase 1, N-terminal fragment</fullName>
        </recommendedName>
    </component>
</protein>